<organism>
    <name type="scientific">Mus musculus</name>
    <name type="common">Mouse</name>
    <dbReference type="NCBI Taxonomy" id="10090"/>
    <lineage>
        <taxon>Eukaryota</taxon>
        <taxon>Metazoa</taxon>
        <taxon>Chordata</taxon>
        <taxon>Craniata</taxon>
        <taxon>Vertebrata</taxon>
        <taxon>Euteleostomi</taxon>
        <taxon>Mammalia</taxon>
        <taxon>Eutheria</taxon>
        <taxon>Euarchontoglires</taxon>
        <taxon>Glires</taxon>
        <taxon>Rodentia</taxon>
        <taxon>Myomorpha</taxon>
        <taxon>Muroidea</taxon>
        <taxon>Muridae</taxon>
        <taxon>Murinae</taxon>
        <taxon>Mus</taxon>
        <taxon>Mus</taxon>
    </lineage>
</organism>
<protein>
    <recommendedName>
        <fullName>Coronin-7</fullName>
        <shortName>Crn7</shortName>
    </recommendedName>
    <alternativeName>
        <fullName>70 kDa WD repeat tumor rejection antigen homolog</fullName>
    </alternativeName>
</protein>
<sequence length="922" mass="100812">MSRFKVSKFRHMEARPSRREAWISDIRAVTTPTCGNHIKSSCSLIAFNSDRPGVLGVISLEGHEENKRHVTYLGCHSDLVTDLDFSPFDDFLLASGSADRTIKLWRLSGTGEALPSVPGVVLGPEELPVEVLQFHPTVDGVLVSTAGKTVKVWDVAKQQPLTELEAHKDLVQSAVWSRDGAIVGTACKDKQLRIFDPRARTQASQSTQAHENNRDIRLAWTGIQEHLVSTGFNQMREREAKLWDTRLFSSALASVTLDTSPGPLIPLLDPDSGLLVLAGKGENQLYCYEVTPQQPALSPVTQCILENVLRGAALVPRRALAVMSCEVLQVLQLSDTAIIPISHHVPRKAVEFHEDLFPDTAGSVPASDAHMWWAGDNQQVQKVSLNPARRPHPCFTSSLVPTMEPAPDMVQPAEMPRADTDLSEGFSSPSSLMSPSTPSSLGPSLSSTSGIGTSPSQRSLQSLLGPSSKFRHTQGSLLHRDSHITNLKGLNLTTPGESDGFCANRLRVAVPLLSSGGQVAVLELQKPGRLPDTALPTLQNGTAVMDLVWDPFDPHRLAVAGEDARIRLWRVPPGGLENVLTTPETVLTGHTEKIYSLRFHPLAADVLASSSYDLTVRIWDLQTGAERLKLQGHQDQIFSLAWSPDGKQLATVCKDGHVRVYEPRSSPLPLQEGPGPEGGRGARIVWVCDGGCLLVSGFDSRSERQLQLYIADALAQGPSALLGLDVAPSTLLPSYDPDTGLVLLTGKGDTRVFLYEVLPEAPFFLECNSFTSPDPHKGFVLLPKTECDIQDVEFARCLRLRQTSLEPVAFRLPRVRKEFFQDDVFPDTAVTWEPALSAKAWFEGANGQPRLLSLQPPGMTPVSQAPREVPARRAPSSAQYLEEKSDQQKKEELLNAMVAKLGNREDPLPQDSFEGVDEDEWD</sequence>
<accession>Q9D2V7</accession>
<accession>Q3UDJ4</accession>
<accession>Q6P8Y8</accession>
<accession>Q8C9V7</accession>
<gene>
    <name type="primary">Coro7</name>
</gene>
<feature type="chain" id="PRO_0000050935" description="Coronin-7">
    <location>
        <begin position="1"/>
        <end position="922"/>
    </location>
</feature>
<feature type="repeat" description="WD 1">
    <location>
        <begin position="75"/>
        <end position="115"/>
    </location>
</feature>
<feature type="repeat" description="WD 2">
    <location>
        <begin position="124"/>
        <end position="163"/>
    </location>
</feature>
<feature type="repeat" description="WD 3">
    <location>
        <begin position="166"/>
        <end position="205"/>
    </location>
</feature>
<feature type="repeat" description="WD 4">
    <location>
        <begin position="209"/>
        <end position="253"/>
    </location>
</feature>
<feature type="repeat" description="WD 5">
    <location>
        <begin position="539"/>
        <end position="581"/>
    </location>
</feature>
<feature type="repeat" description="WD 6">
    <location>
        <begin position="589"/>
        <end position="629"/>
    </location>
</feature>
<feature type="repeat" description="WD 7">
    <location>
        <begin position="632"/>
        <end position="671"/>
    </location>
</feature>
<feature type="repeat" description="WD 8">
    <location>
        <begin position="725"/>
        <end position="765"/>
    </location>
</feature>
<feature type="region of interest" description="Disordered" evidence="4">
    <location>
        <begin position="419"/>
        <end position="467"/>
    </location>
</feature>
<feature type="region of interest" description="Disordered" evidence="4">
    <location>
        <begin position="858"/>
        <end position="922"/>
    </location>
</feature>
<feature type="compositionally biased region" description="Low complexity" evidence="4">
    <location>
        <begin position="427"/>
        <end position="456"/>
    </location>
</feature>
<feature type="compositionally biased region" description="Basic and acidic residues" evidence="4">
    <location>
        <begin position="881"/>
        <end position="893"/>
    </location>
</feature>
<feature type="modified residue" description="Phosphoserine" evidence="7">
    <location>
        <position position="459"/>
    </location>
</feature>
<feature type="modified residue" description="Phosphoserine" evidence="2">
    <location>
        <position position="462"/>
    </location>
</feature>
<feature type="modified residue" description="Phosphoserine" evidence="7">
    <location>
        <position position="912"/>
    </location>
</feature>
<feature type="cross-link" description="Glycyl lysine isopeptide (Lys-Gly) (interchain with G-Cter in ubiquitin)" evidence="3">
    <location>
        <position position="469"/>
    </location>
</feature>
<feature type="sequence conflict" description="In Ref. 1; BAB31380." evidence="6" ref="1">
    <original>V</original>
    <variation>M</variation>
    <location>
        <position position="364"/>
    </location>
</feature>
<feature type="sequence conflict" description="In Ref. 1; BAC30588." evidence="6" ref="1">
    <original>W</original>
    <variation>R</variation>
    <location>
        <position position="372"/>
    </location>
</feature>
<feature type="sequence conflict" description="In Ref. 1; BAB31380." evidence="6" ref="1">
    <original>S</original>
    <variation>C</variation>
    <location>
        <position position="468"/>
    </location>
</feature>
<feature type="sequence conflict" description="In Ref. 1; BAB31380." evidence="6" ref="1">
    <original>Q</original>
    <variation>E</variation>
    <location>
        <position position="518"/>
    </location>
</feature>
<keyword id="KW-0009">Actin-binding</keyword>
<keyword id="KW-0963">Cytoplasm</keyword>
<keyword id="KW-0968">Cytoplasmic vesicle</keyword>
<keyword id="KW-0333">Golgi apparatus</keyword>
<keyword id="KW-1017">Isopeptide bond</keyword>
<keyword id="KW-0472">Membrane</keyword>
<keyword id="KW-0597">Phosphoprotein</keyword>
<keyword id="KW-0653">Protein transport</keyword>
<keyword id="KW-1185">Reference proteome</keyword>
<keyword id="KW-0677">Repeat</keyword>
<keyword id="KW-0813">Transport</keyword>
<keyword id="KW-0832">Ubl conjugation</keyword>
<keyword id="KW-0853">WD repeat</keyword>
<comment type="function">
    <text evidence="1">F-actin regulator involved in anterograde Golgi to endosome transport: upon ubiquitination via 'Lys-33'-linked ubiquitin chains by the BCR(KLHL20) E3 ubiquitin ligase complex, interacts with EPS15 and localizes to the trans-Golgi network, where it promotes actin polymerization, thereby facilitating post-Golgi trafficking. May play a role in the maintenance of the Golgi apparatus morphology (By similarity).</text>
</comment>
<comment type="subunit">
    <text evidence="1">Interacts with clathrin adapter AP1 complex. This interaction takes place at Golgi membranes and not AP1-positive endosomal membranes. Interacts (when ubiquitinated at Lys-469) with EPS15 (By similarity).</text>
</comment>
<comment type="subcellular location">
    <subcellularLocation>
        <location evidence="5">Golgi apparatus membrane</location>
    </subcellularLocation>
    <subcellularLocation>
        <location evidence="1">Golgi apparatus</location>
        <location evidence="1">trans-Golgi network</location>
    </subcellularLocation>
    <subcellularLocation>
        <location evidence="5">Cytoplasmic vesicle</location>
    </subcellularLocation>
    <subcellularLocation>
        <location evidence="5">Cytoplasm</location>
        <location evidence="5">Cytosol</location>
    </subcellularLocation>
    <text>Predominantly cytosolic. Detected on vesicle-like cytoplasmic structures and on the cis-Golgi. Not associated with actin filaments.</text>
</comment>
<comment type="tissue specificity">
    <text evidence="5">In the adult, widely expressed with highest levels in brain, thymus and kidney and low levels in skeletal and heart muscle. Not expressed in lung. In the eye, strongly expressed in the outer plexiform layer of the retina. In the intestine, expressed both in terminally differentiated epithelial cells and in crypt epithelium. In the embryo, strongest expression is seen in brain, thymus, intestine, apical epidermal layers of the skin and developing lens fibers of the eye.</text>
</comment>
<comment type="developmental stage">
    <text evidence="5">In the embryo, expressed from 5 dpc and levels increase strongly until 15 dpc.</text>
</comment>
<comment type="PTM">
    <text>The membrane-associated form is phosphorylated on tyrosine residues.</text>
</comment>
<comment type="PTM">
    <text evidence="1">Ubiquitinated via 'Lys-33'-linked ubiquitin chains by the BCR(KLHL20) E3 ubiquitin ligase complex: 'Lys-33'-linked ubiquitination promotes interaction with EPS15 and facilitates actin polymerization at the trans-Golgi network, thereby facilitating post-Golgi trafficking. Deubiquitinated by ZRANB1/TRABID (By similarity).</text>
</comment>
<comment type="similarity">
    <text evidence="6">Belongs to the WD repeat coronin family.</text>
</comment>
<dbReference type="EMBL" id="AK018739">
    <property type="protein sequence ID" value="BAB31380.1"/>
    <property type="molecule type" value="mRNA"/>
</dbReference>
<dbReference type="EMBL" id="AK040408">
    <property type="protein sequence ID" value="BAC30588.1"/>
    <property type="molecule type" value="mRNA"/>
</dbReference>
<dbReference type="EMBL" id="AK150051">
    <property type="protein sequence ID" value="BAE29267.1"/>
    <property type="molecule type" value="mRNA"/>
</dbReference>
<dbReference type="EMBL" id="BC061006">
    <property type="protein sequence ID" value="AAH61006.1"/>
    <property type="molecule type" value="mRNA"/>
</dbReference>
<dbReference type="CCDS" id="CCDS37242.1"/>
<dbReference type="RefSeq" id="NP_084481.3">
    <property type="nucleotide sequence ID" value="NM_030205.4"/>
</dbReference>
<dbReference type="BioGRID" id="219682">
    <property type="interactions" value="3"/>
</dbReference>
<dbReference type="FunCoup" id="Q9D2V7">
    <property type="interactions" value="1795"/>
</dbReference>
<dbReference type="STRING" id="10090.ENSMUSP00000048489"/>
<dbReference type="iPTMnet" id="Q9D2V7"/>
<dbReference type="PhosphoSitePlus" id="Q9D2V7"/>
<dbReference type="SwissPalm" id="Q9D2V7"/>
<dbReference type="jPOST" id="Q9D2V7"/>
<dbReference type="PaxDb" id="10090-ENSMUSP00000048489"/>
<dbReference type="PeptideAtlas" id="Q9D2V7"/>
<dbReference type="ProteomicsDB" id="284098"/>
<dbReference type="Pumba" id="Q9D2V7"/>
<dbReference type="DNASU" id="78885"/>
<dbReference type="Ensembl" id="ENSMUST00000038552.13">
    <property type="protein sequence ID" value="ENSMUSP00000048489.7"/>
    <property type="gene ID" value="ENSMUSG00000039637.16"/>
</dbReference>
<dbReference type="GeneID" id="78885"/>
<dbReference type="KEGG" id="mmu:78885"/>
<dbReference type="UCSC" id="uc007xzy.1">
    <property type="organism name" value="mouse"/>
</dbReference>
<dbReference type="AGR" id="MGI:1926135"/>
<dbReference type="CTD" id="79585"/>
<dbReference type="MGI" id="MGI:1926135">
    <property type="gene designation" value="Coro7"/>
</dbReference>
<dbReference type="VEuPathDB" id="HostDB:ENSMUSG00000039637"/>
<dbReference type="eggNOG" id="KOG1445">
    <property type="taxonomic scope" value="Eukaryota"/>
</dbReference>
<dbReference type="GeneTree" id="ENSGT00940000156606"/>
<dbReference type="HOGENOM" id="CLU_006604_0_0_1"/>
<dbReference type="InParanoid" id="Q9D2V7"/>
<dbReference type="OMA" id="TIMYMEV"/>
<dbReference type="OrthoDB" id="1850764at2759"/>
<dbReference type="PhylomeDB" id="Q9D2V7"/>
<dbReference type="TreeFam" id="TF314280"/>
<dbReference type="BioGRID-ORCS" id="78885">
    <property type="hits" value="3 hits in 78 CRISPR screens"/>
</dbReference>
<dbReference type="ChiTaRS" id="Coro7">
    <property type="organism name" value="mouse"/>
</dbReference>
<dbReference type="PRO" id="PR:Q9D2V7"/>
<dbReference type="Proteomes" id="UP000000589">
    <property type="component" value="Chromosome 16"/>
</dbReference>
<dbReference type="RNAct" id="Q9D2V7">
    <property type="molecule type" value="protein"/>
</dbReference>
<dbReference type="Bgee" id="ENSMUSG00000039637">
    <property type="expression patterns" value="Expressed in mesenteric lymph node and 238 other cell types or tissues"/>
</dbReference>
<dbReference type="ExpressionAtlas" id="Q9D2V7">
    <property type="expression patterns" value="baseline and differential"/>
</dbReference>
<dbReference type="GO" id="GO:0031410">
    <property type="term" value="C:cytoplasmic vesicle"/>
    <property type="evidence" value="ECO:0007669"/>
    <property type="project" value="UniProtKB-KW"/>
</dbReference>
<dbReference type="GO" id="GO:0005829">
    <property type="term" value="C:cytosol"/>
    <property type="evidence" value="ECO:0007669"/>
    <property type="project" value="UniProtKB-SubCell"/>
</dbReference>
<dbReference type="GO" id="GO:0005794">
    <property type="term" value="C:Golgi apparatus"/>
    <property type="evidence" value="ECO:0000314"/>
    <property type="project" value="MGI"/>
</dbReference>
<dbReference type="GO" id="GO:0000139">
    <property type="term" value="C:Golgi membrane"/>
    <property type="evidence" value="ECO:0007669"/>
    <property type="project" value="UniProtKB-SubCell"/>
</dbReference>
<dbReference type="GO" id="GO:0016020">
    <property type="term" value="C:membrane"/>
    <property type="evidence" value="ECO:0000314"/>
    <property type="project" value="MGI"/>
</dbReference>
<dbReference type="GO" id="GO:0005802">
    <property type="term" value="C:trans-Golgi network"/>
    <property type="evidence" value="ECO:0000250"/>
    <property type="project" value="UniProtKB"/>
</dbReference>
<dbReference type="GO" id="GO:0003779">
    <property type="term" value="F:actin binding"/>
    <property type="evidence" value="ECO:0000250"/>
    <property type="project" value="UniProtKB"/>
</dbReference>
<dbReference type="GO" id="GO:0007015">
    <property type="term" value="P:actin filament organization"/>
    <property type="evidence" value="ECO:0000315"/>
    <property type="project" value="MGI"/>
</dbReference>
<dbReference type="GO" id="GO:0030041">
    <property type="term" value="P:actin filament polymerization"/>
    <property type="evidence" value="ECO:0000250"/>
    <property type="project" value="UniProtKB"/>
</dbReference>
<dbReference type="GO" id="GO:0016477">
    <property type="term" value="P:cell migration"/>
    <property type="evidence" value="ECO:0000315"/>
    <property type="project" value="MGI"/>
</dbReference>
<dbReference type="GO" id="GO:0030010">
    <property type="term" value="P:establishment of cell polarity"/>
    <property type="evidence" value="ECO:0000315"/>
    <property type="project" value="MGI"/>
</dbReference>
<dbReference type="GO" id="GO:0007030">
    <property type="term" value="P:Golgi organization"/>
    <property type="evidence" value="ECO:0000315"/>
    <property type="project" value="MGI"/>
</dbReference>
<dbReference type="GO" id="GO:0006895">
    <property type="term" value="P:Golgi to endosome transport"/>
    <property type="evidence" value="ECO:0000250"/>
    <property type="project" value="UniProtKB"/>
</dbReference>
<dbReference type="GO" id="GO:0035332">
    <property type="term" value="P:positive regulation of hippo signaling"/>
    <property type="evidence" value="ECO:0007669"/>
    <property type="project" value="Ensembl"/>
</dbReference>
<dbReference type="GO" id="GO:0015031">
    <property type="term" value="P:protein transport"/>
    <property type="evidence" value="ECO:0007669"/>
    <property type="project" value="UniProtKB-KW"/>
</dbReference>
<dbReference type="FunFam" id="2.130.10.10:FF:000076">
    <property type="entry name" value="Coronin"/>
    <property type="match status" value="1"/>
</dbReference>
<dbReference type="FunFam" id="2.130.10.10:FF:000310">
    <property type="entry name" value="Coronin"/>
    <property type="match status" value="1"/>
</dbReference>
<dbReference type="Gene3D" id="2.130.10.10">
    <property type="entry name" value="YVTN repeat-like/Quinoprotein amine dehydrogenase"/>
    <property type="match status" value="2"/>
</dbReference>
<dbReference type="InterPro" id="IPR015505">
    <property type="entry name" value="Coronin"/>
</dbReference>
<dbReference type="InterPro" id="IPR015048">
    <property type="entry name" value="DUF1899"/>
</dbReference>
<dbReference type="InterPro" id="IPR020472">
    <property type="entry name" value="G-protein_beta_WD-40_rep"/>
</dbReference>
<dbReference type="InterPro" id="IPR011047">
    <property type="entry name" value="Quinoprotein_ADH-like_sf"/>
</dbReference>
<dbReference type="InterPro" id="IPR015943">
    <property type="entry name" value="WD40/YVTN_repeat-like_dom_sf"/>
</dbReference>
<dbReference type="InterPro" id="IPR019775">
    <property type="entry name" value="WD40_repeat_CS"/>
</dbReference>
<dbReference type="InterPro" id="IPR001680">
    <property type="entry name" value="WD40_rpt"/>
</dbReference>
<dbReference type="PANTHER" id="PTHR10856">
    <property type="entry name" value="CORONIN"/>
    <property type="match status" value="1"/>
</dbReference>
<dbReference type="PANTHER" id="PTHR10856:SF20">
    <property type="entry name" value="CORONIN-7"/>
    <property type="match status" value="1"/>
</dbReference>
<dbReference type="Pfam" id="PF08953">
    <property type="entry name" value="DUF1899"/>
    <property type="match status" value="2"/>
</dbReference>
<dbReference type="Pfam" id="PF00400">
    <property type="entry name" value="WD40"/>
    <property type="match status" value="4"/>
</dbReference>
<dbReference type="Pfam" id="PF16300">
    <property type="entry name" value="WD40_4"/>
    <property type="match status" value="2"/>
</dbReference>
<dbReference type="PRINTS" id="PR00320">
    <property type="entry name" value="GPROTEINBRPT"/>
</dbReference>
<dbReference type="SMART" id="SM01166">
    <property type="entry name" value="DUF1899"/>
    <property type="match status" value="2"/>
</dbReference>
<dbReference type="SMART" id="SM01167">
    <property type="entry name" value="DUF1900"/>
    <property type="match status" value="2"/>
</dbReference>
<dbReference type="SMART" id="SM00320">
    <property type="entry name" value="WD40"/>
    <property type="match status" value="6"/>
</dbReference>
<dbReference type="SUPFAM" id="SSF50998">
    <property type="entry name" value="Quinoprotein alcohol dehydrogenase-like"/>
    <property type="match status" value="1"/>
</dbReference>
<dbReference type="PROSITE" id="PS00678">
    <property type="entry name" value="WD_REPEATS_1"/>
    <property type="match status" value="1"/>
</dbReference>
<dbReference type="PROSITE" id="PS50082">
    <property type="entry name" value="WD_REPEATS_2"/>
    <property type="match status" value="4"/>
</dbReference>
<dbReference type="PROSITE" id="PS50294">
    <property type="entry name" value="WD_REPEATS_REGION"/>
    <property type="match status" value="2"/>
</dbReference>
<name>CORO7_MOUSE</name>
<evidence type="ECO:0000250" key="1"/>
<evidence type="ECO:0000250" key="2">
    <source>
        <dbReference type="UniProtKB" id="O35828"/>
    </source>
</evidence>
<evidence type="ECO:0000250" key="3">
    <source>
        <dbReference type="UniProtKB" id="P57737"/>
    </source>
</evidence>
<evidence type="ECO:0000256" key="4">
    <source>
        <dbReference type="SAM" id="MobiDB-lite"/>
    </source>
</evidence>
<evidence type="ECO:0000269" key="5">
    <source>
    </source>
</evidence>
<evidence type="ECO:0000305" key="6"/>
<evidence type="ECO:0007744" key="7">
    <source>
    </source>
</evidence>
<proteinExistence type="evidence at protein level"/>
<reference key="1">
    <citation type="journal article" date="2005" name="Science">
        <title>The transcriptional landscape of the mammalian genome.</title>
        <authorList>
            <person name="Carninci P."/>
            <person name="Kasukawa T."/>
            <person name="Katayama S."/>
            <person name="Gough J."/>
            <person name="Frith M.C."/>
            <person name="Maeda N."/>
            <person name="Oyama R."/>
            <person name="Ravasi T."/>
            <person name="Lenhard B."/>
            <person name="Wells C."/>
            <person name="Kodzius R."/>
            <person name="Shimokawa K."/>
            <person name="Bajic V.B."/>
            <person name="Brenner S.E."/>
            <person name="Batalov S."/>
            <person name="Forrest A.R."/>
            <person name="Zavolan M."/>
            <person name="Davis M.J."/>
            <person name="Wilming L.G."/>
            <person name="Aidinis V."/>
            <person name="Allen J.E."/>
            <person name="Ambesi-Impiombato A."/>
            <person name="Apweiler R."/>
            <person name="Aturaliya R.N."/>
            <person name="Bailey T.L."/>
            <person name="Bansal M."/>
            <person name="Baxter L."/>
            <person name="Beisel K.W."/>
            <person name="Bersano T."/>
            <person name="Bono H."/>
            <person name="Chalk A.M."/>
            <person name="Chiu K.P."/>
            <person name="Choudhary V."/>
            <person name="Christoffels A."/>
            <person name="Clutterbuck D.R."/>
            <person name="Crowe M.L."/>
            <person name="Dalla E."/>
            <person name="Dalrymple B.P."/>
            <person name="de Bono B."/>
            <person name="Della Gatta G."/>
            <person name="di Bernardo D."/>
            <person name="Down T."/>
            <person name="Engstrom P."/>
            <person name="Fagiolini M."/>
            <person name="Faulkner G."/>
            <person name="Fletcher C.F."/>
            <person name="Fukushima T."/>
            <person name="Furuno M."/>
            <person name="Futaki S."/>
            <person name="Gariboldi M."/>
            <person name="Georgii-Hemming P."/>
            <person name="Gingeras T.R."/>
            <person name="Gojobori T."/>
            <person name="Green R.E."/>
            <person name="Gustincich S."/>
            <person name="Harbers M."/>
            <person name="Hayashi Y."/>
            <person name="Hensch T.K."/>
            <person name="Hirokawa N."/>
            <person name="Hill D."/>
            <person name="Huminiecki L."/>
            <person name="Iacono M."/>
            <person name="Ikeo K."/>
            <person name="Iwama A."/>
            <person name="Ishikawa T."/>
            <person name="Jakt M."/>
            <person name="Kanapin A."/>
            <person name="Katoh M."/>
            <person name="Kawasawa Y."/>
            <person name="Kelso J."/>
            <person name="Kitamura H."/>
            <person name="Kitano H."/>
            <person name="Kollias G."/>
            <person name="Krishnan S.P."/>
            <person name="Kruger A."/>
            <person name="Kummerfeld S.K."/>
            <person name="Kurochkin I.V."/>
            <person name="Lareau L.F."/>
            <person name="Lazarevic D."/>
            <person name="Lipovich L."/>
            <person name="Liu J."/>
            <person name="Liuni S."/>
            <person name="McWilliam S."/>
            <person name="Madan Babu M."/>
            <person name="Madera M."/>
            <person name="Marchionni L."/>
            <person name="Matsuda H."/>
            <person name="Matsuzawa S."/>
            <person name="Miki H."/>
            <person name="Mignone F."/>
            <person name="Miyake S."/>
            <person name="Morris K."/>
            <person name="Mottagui-Tabar S."/>
            <person name="Mulder N."/>
            <person name="Nakano N."/>
            <person name="Nakauchi H."/>
            <person name="Ng P."/>
            <person name="Nilsson R."/>
            <person name="Nishiguchi S."/>
            <person name="Nishikawa S."/>
            <person name="Nori F."/>
            <person name="Ohara O."/>
            <person name="Okazaki Y."/>
            <person name="Orlando V."/>
            <person name="Pang K.C."/>
            <person name="Pavan W.J."/>
            <person name="Pavesi G."/>
            <person name="Pesole G."/>
            <person name="Petrovsky N."/>
            <person name="Piazza S."/>
            <person name="Reed J."/>
            <person name="Reid J.F."/>
            <person name="Ring B.Z."/>
            <person name="Ringwald M."/>
            <person name="Rost B."/>
            <person name="Ruan Y."/>
            <person name="Salzberg S.L."/>
            <person name="Sandelin A."/>
            <person name="Schneider C."/>
            <person name="Schoenbach C."/>
            <person name="Sekiguchi K."/>
            <person name="Semple C.A."/>
            <person name="Seno S."/>
            <person name="Sessa L."/>
            <person name="Sheng Y."/>
            <person name="Shibata Y."/>
            <person name="Shimada H."/>
            <person name="Shimada K."/>
            <person name="Silva D."/>
            <person name="Sinclair B."/>
            <person name="Sperling S."/>
            <person name="Stupka E."/>
            <person name="Sugiura K."/>
            <person name="Sultana R."/>
            <person name="Takenaka Y."/>
            <person name="Taki K."/>
            <person name="Tammoja K."/>
            <person name="Tan S.L."/>
            <person name="Tang S."/>
            <person name="Taylor M.S."/>
            <person name="Tegner J."/>
            <person name="Teichmann S.A."/>
            <person name="Ueda H.R."/>
            <person name="van Nimwegen E."/>
            <person name="Verardo R."/>
            <person name="Wei C.L."/>
            <person name="Yagi K."/>
            <person name="Yamanishi H."/>
            <person name="Zabarovsky E."/>
            <person name="Zhu S."/>
            <person name="Zimmer A."/>
            <person name="Hide W."/>
            <person name="Bult C."/>
            <person name="Grimmond S.M."/>
            <person name="Teasdale R.D."/>
            <person name="Liu E.T."/>
            <person name="Brusic V."/>
            <person name="Quackenbush J."/>
            <person name="Wahlestedt C."/>
            <person name="Mattick J.S."/>
            <person name="Hume D.A."/>
            <person name="Kai C."/>
            <person name="Sasaki D."/>
            <person name="Tomaru Y."/>
            <person name="Fukuda S."/>
            <person name="Kanamori-Katayama M."/>
            <person name="Suzuki M."/>
            <person name="Aoki J."/>
            <person name="Arakawa T."/>
            <person name="Iida J."/>
            <person name="Imamura K."/>
            <person name="Itoh M."/>
            <person name="Kato T."/>
            <person name="Kawaji H."/>
            <person name="Kawagashira N."/>
            <person name="Kawashima T."/>
            <person name="Kojima M."/>
            <person name="Kondo S."/>
            <person name="Konno H."/>
            <person name="Nakano K."/>
            <person name="Ninomiya N."/>
            <person name="Nishio T."/>
            <person name="Okada M."/>
            <person name="Plessy C."/>
            <person name="Shibata K."/>
            <person name="Shiraki T."/>
            <person name="Suzuki S."/>
            <person name="Tagami M."/>
            <person name="Waki K."/>
            <person name="Watahiki A."/>
            <person name="Okamura-Oho Y."/>
            <person name="Suzuki H."/>
            <person name="Kawai J."/>
            <person name="Hayashizaki Y."/>
        </authorList>
    </citation>
    <scope>NUCLEOTIDE SEQUENCE [LARGE SCALE MRNA]</scope>
    <source>
        <strain>C57BL/6J</strain>
        <tissue>Bone marrow</tissue>
        <tissue>Kidney</tissue>
        <tissue>Thymus</tissue>
    </source>
</reference>
<reference key="2">
    <citation type="journal article" date="2004" name="Genome Res.">
        <title>The status, quality, and expansion of the NIH full-length cDNA project: the Mammalian Gene Collection (MGC).</title>
        <authorList>
            <consortium name="The MGC Project Team"/>
        </authorList>
    </citation>
    <scope>NUCLEOTIDE SEQUENCE [LARGE SCALE MRNA]</scope>
    <source>
        <tissue>Brain</tissue>
    </source>
</reference>
<reference key="3">
    <citation type="journal article" date="2004" name="FEBS Lett.">
        <title>Coronin 7, the mammalian POD-1 homologue, localizes to the Golgi apparatus.</title>
        <authorList>
            <person name="Rybakin V."/>
            <person name="Stumpf M."/>
            <person name="Schulze A."/>
            <person name="Majoul I.V."/>
            <person name="Noegel A.A."/>
            <person name="Hasse A."/>
        </authorList>
    </citation>
    <scope>SUBCELLULAR LOCATION</scope>
    <scope>TISSUE SPECIFICITY</scope>
    <scope>DEVELOPMENTAL STAGE</scope>
</reference>
<reference key="4">
    <citation type="journal article" date="2010" name="Cell">
        <title>A tissue-specific atlas of mouse protein phosphorylation and expression.</title>
        <authorList>
            <person name="Huttlin E.L."/>
            <person name="Jedrychowski M.P."/>
            <person name="Elias J.E."/>
            <person name="Goswami T."/>
            <person name="Rad R."/>
            <person name="Beausoleil S.A."/>
            <person name="Villen J."/>
            <person name="Haas W."/>
            <person name="Sowa M.E."/>
            <person name="Gygi S.P."/>
        </authorList>
    </citation>
    <scope>PHOSPHORYLATION [LARGE SCALE ANALYSIS] AT SER-459 AND SER-912</scope>
    <scope>IDENTIFICATION BY MASS SPECTROMETRY [LARGE SCALE ANALYSIS]</scope>
    <source>
        <tissue>Brain</tissue>
        <tissue>Brown adipose tissue</tissue>
        <tissue>Heart</tissue>
        <tissue>Kidney</tissue>
        <tissue>Liver</tissue>
        <tissue>Lung</tissue>
        <tissue>Pancreas</tissue>
        <tissue>Spleen</tissue>
        <tissue>Testis</tissue>
    </source>
</reference>